<keyword id="KW-0963">Cytoplasm</keyword>
<keyword id="KW-0539">Nucleus</keyword>
<keyword id="KW-1185">Reference proteome</keyword>
<protein>
    <recommendedName>
        <fullName>Integrator complex subunit 2 homolog</fullName>
    </recommendedName>
</protein>
<dbReference type="EMBL" id="AAFI02000005">
    <property type="protein sequence ID" value="EAL72870.1"/>
    <property type="molecule type" value="Genomic_DNA"/>
</dbReference>
<dbReference type="RefSeq" id="XP_646565.1">
    <property type="nucleotide sequence ID" value="XM_641473.1"/>
</dbReference>
<dbReference type="SMR" id="Q55CB6"/>
<dbReference type="FunCoup" id="Q55CB6">
    <property type="interactions" value="471"/>
</dbReference>
<dbReference type="STRING" id="44689.Q55CB6"/>
<dbReference type="PaxDb" id="44689-DDB0234072"/>
<dbReference type="EnsemblProtists" id="EAL72870">
    <property type="protein sequence ID" value="EAL72870"/>
    <property type="gene ID" value="DDB_G0271040"/>
</dbReference>
<dbReference type="GeneID" id="8617533"/>
<dbReference type="KEGG" id="ddi:DDB_G0271040"/>
<dbReference type="dictyBase" id="DDB_G0271040">
    <property type="gene designation" value="ints2"/>
</dbReference>
<dbReference type="VEuPathDB" id="AmoebaDB:DDB_G0271040"/>
<dbReference type="eggNOG" id="ENOG502QSP2">
    <property type="taxonomic scope" value="Eukaryota"/>
</dbReference>
<dbReference type="HOGENOM" id="CLU_007707_0_0_1"/>
<dbReference type="InParanoid" id="Q55CB6"/>
<dbReference type="OMA" id="QFPQFFN"/>
<dbReference type="PhylomeDB" id="Q55CB6"/>
<dbReference type="Reactome" id="R-DDI-6807505">
    <property type="pathway name" value="RNA polymerase II transcribes snRNA genes"/>
</dbReference>
<dbReference type="PRO" id="PR:Q55CB6"/>
<dbReference type="Proteomes" id="UP000002195">
    <property type="component" value="Chromosome 1"/>
</dbReference>
<dbReference type="GO" id="GO:0005737">
    <property type="term" value="C:cytoplasm"/>
    <property type="evidence" value="ECO:0007669"/>
    <property type="project" value="UniProtKB-SubCell"/>
</dbReference>
<dbReference type="GO" id="GO:0160232">
    <property type="term" value="C:INTAC complex"/>
    <property type="evidence" value="ECO:0000250"/>
    <property type="project" value="UniProtKB"/>
</dbReference>
<dbReference type="GO" id="GO:0032039">
    <property type="term" value="C:integrator complex"/>
    <property type="evidence" value="ECO:0000318"/>
    <property type="project" value="GO_Central"/>
</dbReference>
<dbReference type="GO" id="GO:0160240">
    <property type="term" value="P:RNA polymerase II transcription initiation surveillance"/>
    <property type="evidence" value="ECO:0000250"/>
    <property type="project" value="UniProtKB"/>
</dbReference>
<dbReference type="GO" id="GO:0034472">
    <property type="term" value="P:snRNA 3'-end processing"/>
    <property type="evidence" value="ECO:0000318"/>
    <property type="project" value="GO_Central"/>
</dbReference>
<dbReference type="InterPro" id="IPR026236">
    <property type="entry name" value="Int2_metazoa"/>
</dbReference>
<dbReference type="InterPro" id="IPR029321">
    <property type="entry name" value="INTS2"/>
</dbReference>
<dbReference type="PANTHER" id="PTHR28608">
    <property type="entry name" value="INTEGRATOR COMPLEX SUBUNIT 2"/>
    <property type="match status" value="1"/>
</dbReference>
<dbReference type="PANTHER" id="PTHR28608:SF1">
    <property type="entry name" value="INTEGRATOR COMPLEX SUBUNIT 2"/>
    <property type="match status" value="1"/>
</dbReference>
<dbReference type="Pfam" id="PF14750">
    <property type="entry name" value="INTS2"/>
    <property type="match status" value="2"/>
</dbReference>
<dbReference type="PRINTS" id="PR02105">
    <property type="entry name" value="INTSUBUNIT2"/>
</dbReference>
<evidence type="ECO:0000250" key="1">
    <source>
        <dbReference type="UniProtKB" id="Q9H0H0"/>
    </source>
</evidence>
<evidence type="ECO:0000256" key="2">
    <source>
        <dbReference type="SAM" id="MobiDB-lite"/>
    </source>
</evidence>
<evidence type="ECO:0000305" key="3"/>
<comment type="function">
    <text evidence="1">Component of the integrator complex, a multiprotein complex that terminates RNA polymerase II (Pol II) transcription in the promoter-proximal region of genes. The integrator complex provides a quality checkpoint during transcription elongation by driving premature transcription termination of transcripts that are unfavorably configured for transcriptional elongation: the complex terminates transcription by (1) catalyzing dephosphorylation of the C-terminal domain (CTD) of Pol II subunit polr2a, (2) degrading the exiting nascent RNA transcript via endonuclease activity and (3) promoting the release of Pol II from bound DNA. The integrator complex is also involved in terminating the synthesis of non-coding Pol II transcripts, such as enhancer RNAs (eRNAs), small nuclear RNAs (snRNAs), telomerase RNAs and long non-coding RNAs (lncRNAs).</text>
</comment>
<comment type="subunit">
    <text evidence="1">Component of the Integrator complex. The core complex associates with protein phosphatase 2A subunits, to form the Integrator-PP2A (INTAC) complex.</text>
</comment>
<comment type="subcellular location">
    <subcellularLocation>
        <location evidence="1">Nucleus</location>
    </subcellularLocation>
    <subcellularLocation>
        <location evidence="1">Cytoplasm</location>
    </subcellularLocation>
</comment>
<comment type="similarity">
    <text evidence="3">Belongs to the Integrator subunit 2 family.</text>
</comment>
<organism>
    <name type="scientific">Dictyostelium discoideum</name>
    <name type="common">Social amoeba</name>
    <dbReference type="NCBI Taxonomy" id="44689"/>
    <lineage>
        <taxon>Eukaryota</taxon>
        <taxon>Amoebozoa</taxon>
        <taxon>Evosea</taxon>
        <taxon>Eumycetozoa</taxon>
        <taxon>Dictyostelia</taxon>
        <taxon>Dictyosteliales</taxon>
        <taxon>Dictyosteliaceae</taxon>
        <taxon>Dictyostelium</taxon>
    </lineage>
</organism>
<gene>
    <name type="primary">ints2</name>
    <name type="ORF">DDB_G0271040</name>
</gene>
<accession>Q55CB6</accession>
<name>INT2_DICDI</name>
<reference key="1">
    <citation type="journal article" date="2005" name="Nature">
        <title>The genome of the social amoeba Dictyostelium discoideum.</title>
        <authorList>
            <person name="Eichinger L."/>
            <person name="Pachebat J.A."/>
            <person name="Gloeckner G."/>
            <person name="Rajandream M.A."/>
            <person name="Sucgang R."/>
            <person name="Berriman M."/>
            <person name="Song J."/>
            <person name="Olsen R."/>
            <person name="Szafranski K."/>
            <person name="Xu Q."/>
            <person name="Tunggal B."/>
            <person name="Kummerfeld S."/>
            <person name="Madera M."/>
            <person name="Konfortov B.A."/>
            <person name="Rivero F."/>
            <person name="Bankier A.T."/>
            <person name="Lehmann R."/>
            <person name="Hamlin N."/>
            <person name="Davies R."/>
            <person name="Gaudet P."/>
            <person name="Fey P."/>
            <person name="Pilcher K."/>
            <person name="Chen G."/>
            <person name="Saunders D."/>
            <person name="Sodergren E.J."/>
            <person name="Davis P."/>
            <person name="Kerhornou A."/>
            <person name="Nie X."/>
            <person name="Hall N."/>
            <person name="Anjard C."/>
            <person name="Hemphill L."/>
            <person name="Bason N."/>
            <person name="Farbrother P."/>
            <person name="Desany B."/>
            <person name="Just E."/>
            <person name="Morio T."/>
            <person name="Rost R."/>
            <person name="Churcher C.M."/>
            <person name="Cooper J."/>
            <person name="Haydock S."/>
            <person name="van Driessche N."/>
            <person name="Cronin A."/>
            <person name="Goodhead I."/>
            <person name="Muzny D.M."/>
            <person name="Mourier T."/>
            <person name="Pain A."/>
            <person name="Lu M."/>
            <person name="Harper D."/>
            <person name="Lindsay R."/>
            <person name="Hauser H."/>
            <person name="James K.D."/>
            <person name="Quiles M."/>
            <person name="Madan Babu M."/>
            <person name="Saito T."/>
            <person name="Buchrieser C."/>
            <person name="Wardroper A."/>
            <person name="Felder M."/>
            <person name="Thangavelu M."/>
            <person name="Johnson D."/>
            <person name="Knights A."/>
            <person name="Loulseged H."/>
            <person name="Mungall K.L."/>
            <person name="Oliver K."/>
            <person name="Price C."/>
            <person name="Quail M.A."/>
            <person name="Urushihara H."/>
            <person name="Hernandez J."/>
            <person name="Rabbinowitsch E."/>
            <person name="Steffen D."/>
            <person name="Sanders M."/>
            <person name="Ma J."/>
            <person name="Kohara Y."/>
            <person name="Sharp S."/>
            <person name="Simmonds M.N."/>
            <person name="Spiegler S."/>
            <person name="Tivey A."/>
            <person name="Sugano S."/>
            <person name="White B."/>
            <person name="Walker D."/>
            <person name="Woodward J.R."/>
            <person name="Winckler T."/>
            <person name="Tanaka Y."/>
            <person name="Shaulsky G."/>
            <person name="Schleicher M."/>
            <person name="Weinstock G.M."/>
            <person name="Rosenthal A."/>
            <person name="Cox E.C."/>
            <person name="Chisholm R.L."/>
            <person name="Gibbs R.A."/>
            <person name="Loomis W.F."/>
            <person name="Platzer M."/>
            <person name="Kay R.R."/>
            <person name="Williams J.G."/>
            <person name="Dear P.H."/>
            <person name="Noegel A.A."/>
            <person name="Barrell B.G."/>
            <person name="Kuspa A."/>
        </authorList>
    </citation>
    <scope>NUCLEOTIDE SEQUENCE [LARGE SCALE GENOMIC DNA]</scope>
    <source>
        <strain>AX4</strain>
    </source>
</reference>
<proteinExistence type="inferred from homology"/>
<feature type="chain" id="PRO_0000344374" description="Integrator complex subunit 2 homolog">
    <location>
        <begin position="1"/>
        <end position="1362"/>
    </location>
</feature>
<feature type="region of interest" description="Disordered" evidence="2">
    <location>
        <begin position="1"/>
        <end position="20"/>
    </location>
</feature>
<feature type="region of interest" description="Disordered" evidence="2">
    <location>
        <begin position="629"/>
        <end position="660"/>
    </location>
</feature>
<feature type="region of interest" description="Disordered" evidence="2">
    <location>
        <begin position="928"/>
        <end position="963"/>
    </location>
</feature>
<feature type="compositionally biased region" description="Low complexity" evidence="2">
    <location>
        <begin position="1"/>
        <end position="10"/>
    </location>
</feature>
<feature type="compositionally biased region" description="Basic and acidic residues" evidence="2">
    <location>
        <begin position="945"/>
        <end position="955"/>
    </location>
</feature>
<sequence>MITSNNNNKNNNKKDVEMKSNEEEGDEIFFSILSGDTNNLFKFLNNNNSNNNNNNNNNNINNSIDIYLPYIIVGILEKNKDLLDEDENLKKLFYSPIYSKSIHNINQYQSLNFDHINEFIKDQVRIRKKLNHVNQDKKDTYLDNIDNPKYQFENGDKEVKMKLVLSDIIALLEFSEMQQSLTISKETKYDAPFIDTPIYNNELNLIFPIICYKCLKHIDFNKLTLSILFLNQANYLIKLLLSNNPNEFNEIIEIVISSIGLIGVEKVKRVLLEICKLSKYCSRFIRTELINRQMLPDLVLLITSQFVKDEIDLLSNIISNRIENQWLKEYISQKDQFSTFNEIRDSLFSTLELISKEISSNSNNNSNNLEHSFIVKSIIRLYCGFSGLLGIKMNQQEISISLSFIEKSIFKNYSKIFLCFLLVCEGLVKTIHPKKELVGYLNHLCKVGNCDELLLLISIYFHTHQLQNIALLVKNILGFRPSIHTESLNQIGEILTKEIYTESLVAKRAQQLPIIEKLNTNHQNISIVCVYHLLSERIFEKYETDVGNWCWSQLTKSSTPIHYLLPSLLDQLCKNIIEPSINNNNTSSTTSIINTSTTAAAASTTASNANTTAATTTTTTAATITTATTTGTTTGISPSSSTTTTSSTGGATSTSISSPNSTSLGNSYLFSTFSSTSSSSSSGLPFYMKRISESIIMNSIQQSQSNLSVQILIIYFVLRYNDSVIKFKSEQKGKPIQFLIETTQLREYNIEFLSKLPIQNCINVILSNQSDYFYIIPPFLYLILSQFPQFFNINLLLLEEERLLNPIEKFIYLPNFYSINGGANNNSGGITNEFLKDTLKRTLSQPTSVQLILRYLNTLSVKELLPFTTTLLDNLLPIIIKNRSLPSVSALISPFVEIWERVFPISQSSIALKTINILTCINDDKSTNNNKDLEDYNNNNNNNNDDVKMKDKEKEDKEEEEEEEILLPISNYTYTDIISDPLVIFRSHPTVFTCPPLFKILLQILFFYMVSSKKNLQNQLHTSSGSGSGTTSNVTLNKQQQEDVSTLILTQESTIIQILLEICLIDGIDTKGLNKILRNKNKKFKESYDPVDIEEIRCQICSFIHQMFIDKPLIIKLVHFQGYLSQLLPITVTLIPSMHICFEFIPELLAQPSLEKQIFAIQLLSYLSEKFPIPKSLKICRQSQTRISFNLNSNTLSYDDRIKFLHSILPSITRITKTFPLLAEDFVSILMEQLPNKHNYQQNLKSFISSIDFNLNSNLNNYTNSIYLQNNKNNNNSSNNNNSNNQNDLLNIDIDNNINSNNNNNLRNINFKKVSNDDKSFFSKVSKNESWLSIKENNDPFNIPIEQEIHQAIQIIIKNLSK</sequence>